<evidence type="ECO:0000250" key="1"/>
<evidence type="ECO:0000250" key="2">
    <source>
        <dbReference type="UniProtKB" id="O35955"/>
    </source>
</evidence>
<evidence type="ECO:0000250" key="3">
    <source>
        <dbReference type="UniProtKB" id="P28062"/>
    </source>
</evidence>
<evidence type="ECO:0000255" key="4">
    <source>
        <dbReference type="PROSITE-ProRule" id="PRU00809"/>
    </source>
</evidence>
<keyword id="KW-0002">3D-structure</keyword>
<keyword id="KW-0963">Cytoplasm</keyword>
<keyword id="KW-0221">Differentiation</keyword>
<keyword id="KW-0378">Hydrolase</keyword>
<keyword id="KW-0391">Immunity</keyword>
<keyword id="KW-0539">Nucleus</keyword>
<keyword id="KW-0645">Protease</keyword>
<keyword id="KW-0647">Proteasome</keyword>
<keyword id="KW-1185">Reference proteome</keyword>
<keyword id="KW-0888">Threonine protease</keyword>
<keyword id="KW-0865">Zymogen</keyword>
<accession>Q5W416</accession>
<organism>
    <name type="scientific">Canis lupus familiaris</name>
    <name type="common">Dog</name>
    <name type="synonym">Canis familiaris</name>
    <dbReference type="NCBI Taxonomy" id="9615"/>
    <lineage>
        <taxon>Eukaryota</taxon>
        <taxon>Metazoa</taxon>
        <taxon>Chordata</taxon>
        <taxon>Craniata</taxon>
        <taxon>Vertebrata</taxon>
        <taxon>Euteleostomi</taxon>
        <taxon>Mammalia</taxon>
        <taxon>Eutheria</taxon>
        <taxon>Laurasiatheria</taxon>
        <taxon>Carnivora</taxon>
        <taxon>Caniformia</taxon>
        <taxon>Canidae</taxon>
        <taxon>Canis</taxon>
    </lineage>
</organism>
<feature type="propeptide" id="PRO_0000026595" description="Removed in mature form" evidence="1">
    <location>
        <begin position="1"/>
        <end position="72"/>
    </location>
</feature>
<feature type="chain" id="PRO_0000026596" description="Proteasome subunit beta type-8">
    <location>
        <begin position="73"/>
        <end position="276"/>
    </location>
</feature>
<feature type="active site" description="Nucleophile" evidence="1">
    <location>
        <position position="73"/>
    </location>
</feature>
<feature type="site" description="Cleavage; by autolysis" evidence="2">
    <location>
        <begin position="72"/>
        <end position="73"/>
    </location>
</feature>
<sequence>MALLEVCGAPRGLRKACAVPALGSQLRSDPGHYSFSLRAPELAVPRGMQPTEFFQSLGENGEKNIRKEMVHGTTTLAFKFQHGVIVAVDSRATAGNYISSSRVNKVIEINPSLLGTMSGCAADCQYWERLLAKECRLYYLRNGERISVSAASKLLSNMVYQYRGMDLSMGSMICGWDKKGPGLYYVDQNGTRLSGNMFSTGSGSTYAYGVMDSGYQPSLSPEEAYELGRRAITYATHRDSYSGGIINMYHMKEDGWVKVESTDVNELLHQYQEANQ</sequence>
<dbReference type="EC" id="3.4.25.1"/>
<dbReference type="EMBL" id="AJ630364">
    <property type="protein sequence ID" value="CAH63452.1"/>
    <property type="molecule type" value="Genomic_DNA"/>
</dbReference>
<dbReference type="RefSeq" id="NP_001041550.1">
    <property type="nucleotide sequence ID" value="NM_001048085.1"/>
</dbReference>
<dbReference type="RefSeq" id="XP_005627104.1">
    <property type="nucleotide sequence ID" value="XM_005627047.2"/>
</dbReference>
<dbReference type="PDB" id="8YSX">
    <property type="method" value="EM"/>
    <property type="resolution" value="2.20 A"/>
    <property type="chains" value="C/D=74-276"/>
</dbReference>
<dbReference type="PDB" id="8YVG">
    <property type="method" value="EM"/>
    <property type="resolution" value="2.00 A"/>
    <property type="chains" value="C/D=74-276"/>
</dbReference>
<dbReference type="PDBsum" id="8YSX"/>
<dbReference type="PDBsum" id="8YVG"/>
<dbReference type="EMDB" id="EMD-39565"/>
<dbReference type="EMDB" id="EMD-39600"/>
<dbReference type="SMR" id="Q5W416"/>
<dbReference type="FunCoup" id="Q5W416">
    <property type="interactions" value="275"/>
</dbReference>
<dbReference type="MEROPS" id="T01.012"/>
<dbReference type="PaxDb" id="9612-ENSCAFP00000001185"/>
<dbReference type="Ensembl" id="ENSCAFT00030027519.1">
    <property type="protein sequence ID" value="ENSCAFP00030024012.1"/>
    <property type="gene ID" value="ENSCAFG00030014780.1"/>
</dbReference>
<dbReference type="Ensembl" id="ENSCAFT00040036519.1">
    <property type="protein sequence ID" value="ENSCAFP00040031805.1"/>
    <property type="gene ID" value="ENSCAFG00040019726.1"/>
</dbReference>
<dbReference type="Ensembl" id="ENSCAFT00845032467.1">
    <property type="protein sequence ID" value="ENSCAFP00845025385.1"/>
    <property type="gene ID" value="ENSCAFG00845018353.1"/>
</dbReference>
<dbReference type="GeneID" id="474865"/>
<dbReference type="KEGG" id="cfa:474865"/>
<dbReference type="CTD" id="5696"/>
<dbReference type="VEuPathDB" id="HostDB:ENSCAFG00845018353"/>
<dbReference type="eggNOG" id="KOG0175">
    <property type="taxonomic scope" value="Eukaryota"/>
</dbReference>
<dbReference type="GeneTree" id="ENSGT00940000159023"/>
<dbReference type="HOGENOM" id="CLU_035750_7_1_1"/>
<dbReference type="InParanoid" id="Q5W416"/>
<dbReference type="OMA" id="IQIEMAH"/>
<dbReference type="OrthoDB" id="6500128at2759"/>
<dbReference type="TreeFam" id="TF106223"/>
<dbReference type="Reactome" id="R-CFA-9907900">
    <property type="pathway name" value="Proteasome assembly"/>
</dbReference>
<dbReference type="Proteomes" id="UP000002254">
    <property type="component" value="Unplaced"/>
</dbReference>
<dbReference type="Proteomes" id="UP000694429">
    <property type="component" value="Chromosome 12"/>
</dbReference>
<dbReference type="Proteomes" id="UP000694542">
    <property type="component" value="Chromosome 12"/>
</dbReference>
<dbReference type="Proteomes" id="UP000805418">
    <property type="component" value="Chromosome 12"/>
</dbReference>
<dbReference type="Bgee" id="ENSCAFG00000000832">
    <property type="expression patterns" value="Expressed in jejunum and 48 other cell types or tissues"/>
</dbReference>
<dbReference type="GO" id="GO:0005829">
    <property type="term" value="C:cytosol"/>
    <property type="evidence" value="ECO:0000318"/>
    <property type="project" value="GO_Central"/>
</dbReference>
<dbReference type="GO" id="GO:0005634">
    <property type="term" value="C:nucleus"/>
    <property type="evidence" value="ECO:0000318"/>
    <property type="project" value="GO_Central"/>
</dbReference>
<dbReference type="GO" id="GO:0005839">
    <property type="term" value="C:proteasome core complex"/>
    <property type="evidence" value="ECO:0000250"/>
    <property type="project" value="UniProtKB"/>
</dbReference>
<dbReference type="GO" id="GO:0019774">
    <property type="term" value="C:proteasome core complex, beta-subunit complex"/>
    <property type="evidence" value="ECO:0000250"/>
    <property type="project" value="UniProtKB"/>
</dbReference>
<dbReference type="GO" id="GO:1990111">
    <property type="term" value="C:spermatoproteasome complex"/>
    <property type="evidence" value="ECO:0000250"/>
    <property type="project" value="UniProtKB"/>
</dbReference>
<dbReference type="GO" id="GO:0004175">
    <property type="term" value="F:endopeptidase activity"/>
    <property type="evidence" value="ECO:0000318"/>
    <property type="project" value="GO_Central"/>
</dbReference>
<dbReference type="GO" id="GO:0004298">
    <property type="term" value="F:threonine-type endopeptidase activity"/>
    <property type="evidence" value="ECO:0007669"/>
    <property type="project" value="UniProtKB-KW"/>
</dbReference>
<dbReference type="GO" id="GO:0045444">
    <property type="term" value="P:fat cell differentiation"/>
    <property type="evidence" value="ECO:0000250"/>
    <property type="project" value="UniProtKB"/>
</dbReference>
<dbReference type="GO" id="GO:0002376">
    <property type="term" value="P:immune system process"/>
    <property type="evidence" value="ECO:0007669"/>
    <property type="project" value="UniProtKB-KW"/>
</dbReference>
<dbReference type="GO" id="GO:0043161">
    <property type="term" value="P:proteasome-mediated ubiquitin-dependent protein catabolic process"/>
    <property type="evidence" value="ECO:0000318"/>
    <property type="project" value="GO_Central"/>
</dbReference>
<dbReference type="CDD" id="cd03761">
    <property type="entry name" value="proteasome_beta_type_5"/>
    <property type="match status" value="1"/>
</dbReference>
<dbReference type="FunFam" id="3.60.20.10:FF:000038">
    <property type="entry name" value="Proteasome subunit beta"/>
    <property type="match status" value="1"/>
</dbReference>
<dbReference type="Gene3D" id="3.60.20.10">
    <property type="entry name" value="Glutamine Phosphoribosylpyrophosphate, subunit 1, domain 1"/>
    <property type="match status" value="1"/>
</dbReference>
<dbReference type="InterPro" id="IPR029055">
    <property type="entry name" value="Ntn_hydrolases_N"/>
</dbReference>
<dbReference type="InterPro" id="IPR000243">
    <property type="entry name" value="Pept_T1A_subB"/>
</dbReference>
<dbReference type="InterPro" id="IPR016050">
    <property type="entry name" value="Proteasome_bsu_CS"/>
</dbReference>
<dbReference type="InterPro" id="IPR001353">
    <property type="entry name" value="Proteasome_sua/b"/>
</dbReference>
<dbReference type="InterPro" id="IPR023333">
    <property type="entry name" value="Proteasome_suB-type"/>
</dbReference>
<dbReference type="PANTHER" id="PTHR32194">
    <property type="entry name" value="METALLOPROTEASE TLDD"/>
    <property type="match status" value="1"/>
</dbReference>
<dbReference type="PANTHER" id="PTHR32194:SF8">
    <property type="entry name" value="PROTEASOME SUBUNIT BETA"/>
    <property type="match status" value="1"/>
</dbReference>
<dbReference type="Pfam" id="PF00227">
    <property type="entry name" value="Proteasome"/>
    <property type="match status" value="1"/>
</dbReference>
<dbReference type="PRINTS" id="PR00141">
    <property type="entry name" value="PROTEASOME"/>
</dbReference>
<dbReference type="SUPFAM" id="SSF56235">
    <property type="entry name" value="N-terminal nucleophile aminohydrolases (Ntn hydrolases)"/>
    <property type="match status" value="1"/>
</dbReference>
<dbReference type="PROSITE" id="PS00854">
    <property type="entry name" value="PROTEASOME_BETA_1"/>
    <property type="match status" value="1"/>
</dbReference>
<dbReference type="PROSITE" id="PS51476">
    <property type="entry name" value="PROTEASOME_BETA_2"/>
    <property type="match status" value="1"/>
</dbReference>
<proteinExistence type="evidence at protein level"/>
<reference key="1">
    <citation type="journal article" date="2005" name="Genomics">
        <title>Genomic sequence of the class II region of the canine MHC: comparison with the MHC of other mammalian species.</title>
        <authorList>
            <person name="Debenham S.L."/>
            <person name="Hart E.A."/>
            <person name="Ashurst J.L."/>
            <person name="Howe K.L."/>
            <person name="Quail M.A."/>
            <person name="Ollier W.E.R."/>
            <person name="Binns M.M."/>
        </authorList>
    </citation>
    <scope>NUCLEOTIDE SEQUENCE [LARGE SCALE GENOMIC DNA]</scope>
    <source>
        <strain>Doberman pinscher</strain>
    </source>
</reference>
<gene>
    <name type="primary">PSMB8</name>
</gene>
<name>PSB8_CANLF</name>
<protein>
    <recommendedName>
        <fullName>Proteasome subunit beta type-8</fullName>
        <ecNumber>3.4.25.1</ecNumber>
    </recommendedName>
    <alternativeName>
        <fullName>Proteasome subunit beta-5i</fullName>
    </alternativeName>
</protein>
<comment type="function">
    <text evidence="1 3">The proteasome is a multicatalytic proteinase complex which is characterized by its ability to cleave peptides with Arg, Phe, Tyr, Leu, and Glu adjacent to the leaving group at neutral or slightly basic pH. The proteasome has an ATP-dependent proteolytic activity. This subunit is involved in antigen processing to generate class I binding peptides (By similarity). May participate in the generation of spliced peptides resulting from the ligation of two separate proteasomal cleavage products that are not contiguous in the parental protein (By similarity). Required for adipocyte differentiation (By similarity).</text>
</comment>
<comment type="catalytic activity">
    <reaction>
        <text>Cleavage of peptide bonds with very broad specificity.</text>
        <dbReference type="EC" id="3.4.25.1"/>
    </reaction>
</comment>
<comment type="subunit">
    <text>The 26S proteasome consists of a 20S proteasome core and two 19S regulatory subunits. The 20S proteasome core is composed of 28 subunits that are arranged in four stacked rings, resulting in a barrel-shaped structure. The two end rings are each formed by seven alpha subunits, and the two central rings are each formed by seven beta subunits. The catalytic chamber with the active sites is on the inside of the barrel. Component of the immunoproteasome, where it displaces the equivalent housekeeping subunit PSMB5. Component of the spermatoproteasome, a form of the proteasome specifically found in testis. Directly interacts with POMP.</text>
</comment>
<comment type="subcellular location">
    <subcellularLocation>
        <location evidence="4">Cytoplasm</location>
    </subcellularLocation>
    <subcellularLocation>
        <location evidence="1">Nucleus</location>
    </subcellularLocation>
</comment>
<comment type="induction">
    <text>Up-regulated by interferon gamma (at protein level).</text>
</comment>
<comment type="PTM">
    <text evidence="2">Autocleaved. The resulting N-terminal Thr residue of the mature subunit is responsible for the nucleophile proteolytic activity.</text>
</comment>
<comment type="similarity">
    <text evidence="4">Belongs to the peptidase T1B family.</text>
</comment>